<accession>A4SRS5</accession>
<evidence type="ECO:0000255" key="1">
    <source>
        <dbReference type="HAMAP-Rule" id="MF_01872"/>
    </source>
</evidence>
<comment type="function">
    <text evidence="1">Specifically methylates the adenine in position 37 of tRNA(1)(Val) (anticodon cmo5UAC).</text>
</comment>
<comment type="catalytic activity">
    <reaction evidence="1">
        <text>adenosine(37) in tRNA1(Val) + S-adenosyl-L-methionine = N(6)-methyladenosine(37) in tRNA1(Val) + S-adenosyl-L-homocysteine + H(+)</text>
        <dbReference type="Rhea" id="RHEA:43160"/>
        <dbReference type="Rhea" id="RHEA-COMP:10369"/>
        <dbReference type="Rhea" id="RHEA-COMP:10370"/>
        <dbReference type="ChEBI" id="CHEBI:15378"/>
        <dbReference type="ChEBI" id="CHEBI:57856"/>
        <dbReference type="ChEBI" id="CHEBI:59789"/>
        <dbReference type="ChEBI" id="CHEBI:74411"/>
        <dbReference type="ChEBI" id="CHEBI:74449"/>
        <dbReference type="EC" id="2.1.1.223"/>
    </reaction>
</comment>
<comment type="subcellular location">
    <subcellularLocation>
        <location evidence="1">Cytoplasm</location>
    </subcellularLocation>
</comment>
<comment type="similarity">
    <text evidence="1">Belongs to the methyltransferase superfamily. tRNA (adenine-N(6)-)-methyltransferase family.</text>
</comment>
<dbReference type="EC" id="2.1.1.223" evidence="1"/>
<dbReference type="EMBL" id="CP000644">
    <property type="protein sequence ID" value="ABO91597.1"/>
    <property type="molecule type" value="Genomic_DNA"/>
</dbReference>
<dbReference type="RefSeq" id="WP_011899100.1">
    <property type="nucleotide sequence ID" value="NC_009348.1"/>
</dbReference>
<dbReference type="SMR" id="A4SRS5"/>
<dbReference type="STRING" id="29491.GCA_000820065_02491"/>
<dbReference type="KEGG" id="asa:ASA_3636"/>
<dbReference type="PATRIC" id="fig|382245.13.peg.3610"/>
<dbReference type="eggNOG" id="COG4123">
    <property type="taxonomic scope" value="Bacteria"/>
</dbReference>
<dbReference type="HOGENOM" id="CLU_061983_0_0_6"/>
<dbReference type="Proteomes" id="UP000000225">
    <property type="component" value="Chromosome"/>
</dbReference>
<dbReference type="GO" id="GO:0005737">
    <property type="term" value="C:cytoplasm"/>
    <property type="evidence" value="ECO:0007669"/>
    <property type="project" value="UniProtKB-SubCell"/>
</dbReference>
<dbReference type="GO" id="GO:0003676">
    <property type="term" value="F:nucleic acid binding"/>
    <property type="evidence" value="ECO:0007669"/>
    <property type="project" value="InterPro"/>
</dbReference>
<dbReference type="GO" id="GO:0016430">
    <property type="term" value="F:tRNA (adenine-N6)-methyltransferase activity"/>
    <property type="evidence" value="ECO:0007669"/>
    <property type="project" value="UniProtKB-UniRule"/>
</dbReference>
<dbReference type="GO" id="GO:0032259">
    <property type="term" value="P:methylation"/>
    <property type="evidence" value="ECO:0007669"/>
    <property type="project" value="UniProtKB-KW"/>
</dbReference>
<dbReference type="GO" id="GO:0008033">
    <property type="term" value="P:tRNA processing"/>
    <property type="evidence" value="ECO:0007669"/>
    <property type="project" value="UniProtKB-UniRule"/>
</dbReference>
<dbReference type="CDD" id="cd02440">
    <property type="entry name" value="AdoMet_MTases"/>
    <property type="match status" value="1"/>
</dbReference>
<dbReference type="Gene3D" id="3.40.50.150">
    <property type="entry name" value="Vaccinia Virus protein VP39"/>
    <property type="match status" value="1"/>
</dbReference>
<dbReference type="HAMAP" id="MF_01872">
    <property type="entry name" value="tRNA_methyltr_YfiC"/>
    <property type="match status" value="1"/>
</dbReference>
<dbReference type="InterPro" id="IPR002052">
    <property type="entry name" value="DNA_methylase_N6_adenine_CS"/>
</dbReference>
<dbReference type="InterPro" id="IPR029063">
    <property type="entry name" value="SAM-dependent_MTases_sf"/>
</dbReference>
<dbReference type="InterPro" id="IPR007848">
    <property type="entry name" value="Small_mtfrase_dom"/>
</dbReference>
<dbReference type="InterPro" id="IPR050210">
    <property type="entry name" value="tRNA_Adenine-N(6)_MTase"/>
</dbReference>
<dbReference type="InterPro" id="IPR022882">
    <property type="entry name" value="tRNA_adenine-N6_MeTrfase"/>
</dbReference>
<dbReference type="PANTHER" id="PTHR47739">
    <property type="entry name" value="TRNA1(VAL) (ADENINE(37)-N6)-METHYLTRANSFERASE"/>
    <property type="match status" value="1"/>
</dbReference>
<dbReference type="PANTHER" id="PTHR47739:SF1">
    <property type="entry name" value="TRNA1(VAL) (ADENINE(37)-N6)-METHYLTRANSFERASE"/>
    <property type="match status" value="1"/>
</dbReference>
<dbReference type="Pfam" id="PF05175">
    <property type="entry name" value="MTS"/>
    <property type="match status" value="1"/>
</dbReference>
<dbReference type="SUPFAM" id="SSF53335">
    <property type="entry name" value="S-adenosyl-L-methionine-dependent methyltransferases"/>
    <property type="match status" value="1"/>
</dbReference>
<dbReference type="PROSITE" id="PS00092">
    <property type="entry name" value="N6_MTASE"/>
    <property type="match status" value="1"/>
</dbReference>
<organism>
    <name type="scientific">Aeromonas salmonicida (strain A449)</name>
    <dbReference type="NCBI Taxonomy" id="382245"/>
    <lineage>
        <taxon>Bacteria</taxon>
        <taxon>Pseudomonadati</taxon>
        <taxon>Pseudomonadota</taxon>
        <taxon>Gammaproteobacteria</taxon>
        <taxon>Aeromonadales</taxon>
        <taxon>Aeromonadaceae</taxon>
        <taxon>Aeromonas</taxon>
    </lineage>
</organism>
<gene>
    <name type="ordered locus">ASA_3636</name>
</gene>
<reference key="1">
    <citation type="journal article" date="2008" name="BMC Genomics">
        <title>The genome of Aeromonas salmonicida subsp. salmonicida A449: insights into the evolution of a fish pathogen.</title>
        <authorList>
            <person name="Reith M.E."/>
            <person name="Singh R.K."/>
            <person name="Curtis B."/>
            <person name="Boyd J.M."/>
            <person name="Bouevitch A."/>
            <person name="Kimball J."/>
            <person name="Munholland J."/>
            <person name="Murphy C."/>
            <person name="Sarty D."/>
            <person name="Williams J."/>
            <person name="Nash J.H."/>
            <person name="Johnson S.C."/>
            <person name="Brown L.L."/>
        </authorList>
    </citation>
    <scope>NUCLEOTIDE SEQUENCE [LARGE SCALE GENOMIC DNA]</scope>
    <source>
        <strain>A449</strain>
    </source>
</reference>
<feature type="chain" id="PRO_0000387337" description="tRNA1(Val) (adenine(37)-N6)-methyltransferase">
    <location>
        <begin position="1"/>
        <end position="236"/>
    </location>
</feature>
<protein>
    <recommendedName>
        <fullName evidence="1">tRNA1(Val) (adenine(37)-N6)-methyltransferase</fullName>
        <ecNumber evidence="1">2.1.1.223</ecNumber>
    </recommendedName>
    <alternativeName>
        <fullName evidence="1">tRNA m6A37 methyltransferase</fullName>
    </alternativeName>
</protein>
<sequence length="236" mass="25648">MGRNSGFTFKQFHVEHDRCAMKVGTDGILLGAWAPVAETRRVLDIGTGSGLVALMLAQRSRSDCIIDAVDLDMNAATQARENVAASPWETRINIMEGAIQDYQATPYDLIVSNPPYFGAGQSLRDPARALARHTGSLDSRDLLAACDRLLTPVGQVALVLPTAMADEILCISADYDLHGVCYTAVINRAGKEANRVLLLLGRGLNRCEQGEIVIHSAGGAYSDRYIQLTHPFYLKM</sequence>
<name>TRMN6_AERS4</name>
<keyword id="KW-0963">Cytoplasm</keyword>
<keyword id="KW-0489">Methyltransferase</keyword>
<keyword id="KW-0949">S-adenosyl-L-methionine</keyword>
<keyword id="KW-0808">Transferase</keyword>
<keyword id="KW-0819">tRNA processing</keyword>
<proteinExistence type="inferred from homology"/>